<proteinExistence type="inferred from homology"/>
<protein>
    <recommendedName>
        <fullName evidence="1">Flagellar P-ring protein</fullName>
    </recommendedName>
    <alternativeName>
        <fullName evidence="1">Basal body P-ring protein</fullName>
    </alternativeName>
</protein>
<organism>
    <name type="scientific">Pseudomonas putida (strain ATCC 47054 / DSM 6125 / CFBP 8728 / NCIMB 11950 / KT2440)</name>
    <dbReference type="NCBI Taxonomy" id="160488"/>
    <lineage>
        <taxon>Bacteria</taxon>
        <taxon>Pseudomonadati</taxon>
        <taxon>Pseudomonadota</taxon>
        <taxon>Gammaproteobacteria</taxon>
        <taxon>Pseudomonadales</taxon>
        <taxon>Pseudomonadaceae</taxon>
        <taxon>Pseudomonas</taxon>
    </lineage>
</organism>
<gene>
    <name evidence="1" type="primary">flgI</name>
    <name type="ordered locus">PP_4383</name>
</gene>
<accession>Q88ES0</accession>
<dbReference type="EMBL" id="AE015451">
    <property type="protein sequence ID" value="AAN69961.1"/>
    <property type="molecule type" value="Genomic_DNA"/>
</dbReference>
<dbReference type="RefSeq" id="NP_746497.1">
    <property type="nucleotide sequence ID" value="NC_002947.4"/>
</dbReference>
<dbReference type="RefSeq" id="WP_004575771.1">
    <property type="nucleotide sequence ID" value="NZ_CP169744.1"/>
</dbReference>
<dbReference type="SMR" id="Q88ES0"/>
<dbReference type="STRING" id="160488.PP_4383"/>
<dbReference type="PaxDb" id="160488-PP_4383"/>
<dbReference type="KEGG" id="ppu:PP_4383"/>
<dbReference type="PATRIC" id="fig|160488.4.peg.4658"/>
<dbReference type="eggNOG" id="COG1706">
    <property type="taxonomic scope" value="Bacteria"/>
</dbReference>
<dbReference type="HOGENOM" id="CLU_045235_1_0_6"/>
<dbReference type="OrthoDB" id="9786431at2"/>
<dbReference type="PhylomeDB" id="Q88ES0"/>
<dbReference type="BioCyc" id="PPUT160488:G1G01-4661-MONOMER"/>
<dbReference type="Proteomes" id="UP000000556">
    <property type="component" value="Chromosome"/>
</dbReference>
<dbReference type="GO" id="GO:0009428">
    <property type="term" value="C:bacterial-type flagellum basal body, distal rod, P ring"/>
    <property type="evidence" value="ECO:0007669"/>
    <property type="project" value="InterPro"/>
</dbReference>
<dbReference type="GO" id="GO:0030288">
    <property type="term" value="C:outer membrane-bounded periplasmic space"/>
    <property type="evidence" value="ECO:0007669"/>
    <property type="project" value="InterPro"/>
</dbReference>
<dbReference type="GO" id="GO:0005198">
    <property type="term" value="F:structural molecule activity"/>
    <property type="evidence" value="ECO:0007669"/>
    <property type="project" value="InterPro"/>
</dbReference>
<dbReference type="GO" id="GO:0071973">
    <property type="term" value="P:bacterial-type flagellum-dependent cell motility"/>
    <property type="evidence" value="ECO:0007669"/>
    <property type="project" value="InterPro"/>
</dbReference>
<dbReference type="HAMAP" id="MF_00416">
    <property type="entry name" value="FlgI"/>
    <property type="match status" value="1"/>
</dbReference>
<dbReference type="InterPro" id="IPR001782">
    <property type="entry name" value="Flag_FlgI"/>
</dbReference>
<dbReference type="NCBIfam" id="NF003676">
    <property type="entry name" value="PRK05303.1"/>
    <property type="match status" value="1"/>
</dbReference>
<dbReference type="PANTHER" id="PTHR30381">
    <property type="entry name" value="FLAGELLAR P-RING PERIPLASMIC PROTEIN FLGI"/>
    <property type="match status" value="1"/>
</dbReference>
<dbReference type="PANTHER" id="PTHR30381:SF0">
    <property type="entry name" value="FLAGELLAR P-RING PROTEIN"/>
    <property type="match status" value="1"/>
</dbReference>
<dbReference type="Pfam" id="PF02119">
    <property type="entry name" value="FlgI"/>
    <property type="match status" value="1"/>
</dbReference>
<dbReference type="PRINTS" id="PR01010">
    <property type="entry name" value="FLGPRINGFLGI"/>
</dbReference>
<keyword id="KW-0975">Bacterial flagellum</keyword>
<keyword id="KW-0574">Periplasm</keyword>
<keyword id="KW-1185">Reference proteome</keyword>
<keyword id="KW-0732">Signal</keyword>
<feature type="signal peptide" evidence="1">
    <location>
        <begin position="1"/>
        <end position="22"/>
    </location>
</feature>
<feature type="chain" id="PRO_0000009514" description="Flagellar P-ring protein">
    <location>
        <begin position="23"/>
        <end position="369"/>
    </location>
</feature>
<name>FLGI_PSEPK</name>
<evidence type="ECO:0000255" key="1">
    <source>
        <dbReference type="HAMAP-Rule" id="MF_00416"/>
    </source>
</evidence>
<sequence>MFNVRQLIATTLLLSCAFAAQAERLKDIASISGVRSNQLIGYGLVVGLNGTGDQTTQTPFTLQTFNNMLSQFGIKVPAGSGNVQLKNVAAVSVHADLPPFAKPGQVVDITVSSIGNSKSLRGGSLLMTPLKGIDGNVYAIAQGNLVVGGFDAEGRDGSKITVNVPSAGRIPGGASVERAVPSGFNQGNTLTLNLNRPDFTTAKRIVDKVNDLLGPGVAQAVDGGSVRVSAPMDPSQRVDYLSILENLEIDPGQAVAKVIINSRTGTIVIGQNVKVSPAAVTHGSLTVTITEDPIVSQPGAFSNGQTAVVPRSRVNAEQEAKPMFKFGPGTTLDEIVRAVNQVGAAPGDLMAILEALKQAGALQADLIVI</sequence>
<reference key="1">
    <citation type="journal article" date="2002" name="Environ. Microbiol.">
        <title>Complete genome sequence and comparative analysis of the metabolically versatile Pseudomonas putida KT2440.</title>
        <authorList>
            <person name="Nelson K.E."/>
            <person name="Weinel C."/>
            <person name="Paulsen I.T."/>
            <person name="Dodson R.J."/>
            <person name="Hilbert H."/>
            <person name="Martins dos Santos V.A.P."/>
            <person name="Fouts D.E."/>
            <person name="Gill S.R."/>
            <person name="Pop M."/>
            <person name="Holmes M."/>
            <person name="Brinkac L.M."/>
            <person name="Beanan M.J."/>
            <person name="DeBoy R.T."/>
            <person name="Daugherty S.C."/>
            <person name="Kolonay J.F."/>
            <person name="Madupu R."/>
            <person name="Nelson W.C."/>
            <person name="White O."/>
            <person name="Peterson J.D."/>
            <person name="Khouri H.M."/>
            <person name="Hance I."/>
            <person name="Chris Lee P."/>
            <person name="Holtzapple E.K."/>
            <person name="Scanlan D."/>
            <person name="Tran K."/>
            <person name="Moazzez A."/>
            <person name="Utterback T.R."/>
            <person name="Rizzo M."/>
            <person name="Lee K."/>
            <person name="Kosack D."/>
            <person name="Moestl D."/>
            <person name="Wedler H."/>
            <person name="Lauber J."/>
            <person name="Stjepandic D."/>
            <person name="Hoheisel J."/>
            <person name="Straetz M."/>
            <person name="Heim S."/>
            <person name="Kiewitz C."/>
            <person name="Eisen J.A."/>
            <person name="Timmis K.N."/>
            <person name="Duesterhoeft A."/>
            <person name="Tuemmler B."/>
            <person name="Fraser C.M."/>
        </authorList>
    </citation>
    <scope>NUCLEOTIDE SEQUENCE [LARGE SCALE GENOMIC DNA]</scope>
    <source>
        <strain>ATCC 47054 / DSM 6125 / CFBP 8728 / NCIMB 11950 / KT2440</strain>
    </source>
</reference>
<comment type="function">
    <text evidence="1">Assembles around the rod to form the L-ring and probably protects the motor/basal body from shearing forces during rotation.</text>
</comment>
<comment type="subunit">
    <text evidence="1">The basal body constitutes a major portion of the flagellar organelle and consists of four rings (L,P,S, and M) mounted on a central rod.</text>
</comment>
<comment type="subcellular location">
    <subcellularLocation>
        <location evidence="1">Periplasm</location>
    </subcellularLocation>
    <subcellularLocation>
        <location evidence="1">Bacterial flagellum basal body</location>
    </subcellularLocation>
</comment>
<comment type="similarity">
    <text evidence="1">Belongs to the FlgI family.</text>
</comment>